<accession>T2G6Z9</accession>
<accession>D2YW42</accession>
<accession>S5WDB4</accession>
<sequence length="666" mass="74880">MPKIPSKETPRGVAIAEPIIVEHSVDLLMVGGGMGNCGAAFEAVRWADKYAPEAKILLVDKASLERSGAVAQGLSAINTYLGDNNADDYVRMVRTDLMGLVREDLIYDLGRHVDDSVHLFEEWGLPVWIKDEHGHNLDGAQAKAAGKSLRNGDKPVRSGRWQIMINGESYKVIVAEAAKNALGQDRIIERIFIVKLLLDKNTPNRIAGAVGFNLRANEVHIFKANAMVVACGGAVNVYRPRSVGEGMGRAWYPVWNAGSTYTMCAQVGAEMTMMENRFVPARFKDGYGPVGAWFLLFKAKATNCKGEDYCATNRAMLKPYEERGYAKGHVIPTCLRNHMMLREMREGRGPIYMDTKTALQTSFATMSPAQQKHLEAEAWEDFLDMCVGQANLWAATNCAPEERGSEIMPTEPYLLGSHSGCCGIWASGPDEAWVPEDYKVRAANGKVYNRMTTVEGLWTCADGVGASGHKFSSGSHAEGRIVGKQMVRWYLDHKDFKPEFVETAEELKTLIYRPYYNYEKGKGASTCPVVNPEYISPKNFMMRLIKCTDEYGGGVGTYYNTSKALLDTGFWLMEMLEEDSLKLAARDLHELLRCWENYHRLWTVRLHMQHIAFREESRYPGFYYRADFLGLDDSKWKCFVNSKYDPAKKETKIFKKPYYQIIPTDA</sequence>
<proteinExistence type="evidence at protein level"/>
<dbReference type="EC" id="1.8.99.2" evidence="1 2 3"/>
<dbReference type="EMBL" id="KF113859">
    <property type="protein sequence ID" value="AGS82785.1"/>
    <property type="molecule type" value="Genomic_DNA"/>
</dbReference>
<dbReference type="EMBL" id="CP006585">
    <property type="protein sequence ID" value="AGW12370.1"/>
    <property type="molecule type" value="Genomic_DNA"/>
</dbReference>
<dbReference type="RefSeq" id="WP_021759000.1">
    <property type="nucleotide sequence ID" value="NC_022444.1"/>
</dbReference>
<dbReference type="PDB" id="3GYX">
    <property type="method" value="X-ray"/>
    <property type="resolution" value="3.20 A"/>
    <property type="chains" value="A/C/E/G/I/K=3-663"/>
</dbReference>
<dbReference type="PDBsum" id="3GYX"/>
<dbReference type="SMR" id="T2G6Z9"/>
<dbReference type="IntAct" id="T2G6Z9">
    <property type="interactions" value="1"/>
</dbReference>
<dbReference type="STRING" id="1121448.DGI_0457"/>
<dbReference type="KEGG" id="dgg:DGI_0457"/>
<dbReference type="PATRIC" id="fig|1121448.10.peg.454"/>
<dbReference type="HOGENOM" id="CLU_014312_8_3_7"/>
<dbReference type="OrthoDB" id="9806724at2"/>
<dbReference type="SABIO-RK" id="T2G6Z9"/>
<dbReference type="EvolutionaryTrace" id="T2G6Z9"/>
<dbReference type="Proteomes" id="UP000016587">
    <property type="component" value="Chromosome"/>
</dbReference>
<dbReference type="GO" id="GO:0005737">
    <property type="term" value="C:cytoplasm"/>
    <property type="evidence" value="ECO:0000314"/>
    <property type="project" value="UniProtKB"/>
</dbReference>
<dbReference type="GO" id="GO:0005886">
    <property type="term" value="C:plasma membrane"/>
    <property type="evidence" value="ECO:0007669"/>
    <property type="project" value="TreeGrafter"/>
</dbReference>
<dbReference type="GO" id="GO:0009973">
    <property type="term" value="F:adenylyl-sulfate reductase activity"/>
    <property type="evidence" value="ECO:0000314"/>
    <property type="project" value="UniProtKB"/>
</dbReference>
<dbReference type="GO" id="GO:0009055">
    <property type="term" value="F:electron transfer activity"/>
    <property type="evidence" value="ECO:0007669"/>
    <property type="project" value="TreeGrafter"/>
</dbReference>
<dbReference type="GO" id="GO:0071949">
    <property type="term" value="F:FAD binding"/>
    <property type="evidence" value="ECO:0000314"/>
    <property type="project" value="UniProtKB"/>
</dbReference>
<dbReference type="GO" id="GO:0046982">
    <property type="term" value="F:protein heterodimerization activity"/>
    <property type="evidence" value="ECO:0000314"/>
    <property type="project" value="UniProtKB"/>
</dbReference>
<dbReference type="GO" id="GO:0000104">
    <property type="term" value="F:succinate dehydrogenase activity"/>
    <property type="evidence" value="ECO:0007669"/>
    <property type="project" value="TreeGrafter"/>
</dbReference>
<dbReference type="GO" id="GO:0019420">
    <property type="term" value="P:dissimilatory sulfate reduction"/>
    <property type="evidence" value="ECO:0000314"/>
    <property type="project" value="UniProtKB"/>
</dbReference>
<dbReference type="GO" id="GO:0051290">
    <property type="term" value="P:protein heterotetramerization"/>
    <property type="evidence" value="ECO:0000314"/>
    <property type="project" value="UniProtKB"/>
</dbReference>
<dbReference type="Gene3D" id="3.50.50.60">
    <property type="entry name" value="FAD/NAD(P)-binding domain"/>
    <property type="match status" value="1"/>
</dbReference>
<dbReference type="Gene3D" id="3.90.700.10">
    <property type="entry name" value="Succinate dehydrogenase/fumarate reductase flavoprotein, catalytic domain"/>
    <property type="match status" value="1"/>
</dbReference>
<dbReference type="InterPro" id="IPR011803">
    <property type="entry name" value="AprA"/>
</dbReference>
<dbReference type="InterPro" id="IPR003953">
    <property type="entry name" value="FAD-dep_OxRdtase_2_FAD-bd"/>
</dbReference>
<dbReference type="InterPro" id="IPR036188">
    <property type="entry name" value="FAD/NAD-bd_sf"/>
</dbReference>
<dbReference type="InterPro" id="IPR037099">
    <property type="entry name" value="Fum_R/Succ_DH_flav-like_C_sf"/>
</dbReference>
<dbReference type="InterPro" id="IPR030664">
    <property type="entry name" value="SdhA/FrdA/AprA"/>
</dbReference>
<dbReference type="InterPro" id="IPR027477">
    <property type="entry name" value="Succ_DH/fumarate_Rdtase_cat_sf"/>
</dbReference>
<dbReference type="NCBIfam" id="TIGR02061">
    <property type="entry name" value="aprA"/>
    <property type="match status" value="1"/>
</dbReference>
<dbReference type="PANTHER" id="PTHR11632">
    <property type="entry name" value="SUCCINATE DEHYDROGENASE 2 FLAVOPROTEIN SUBUNIT"/>
    <property type="match status" value="1"/>
</dbReference>
<dbReference type="PANTHER" id="PTHR11632:SF51">
    <property type="entry name" value="SUCCINATE DEHYDROGENASE [UBIQUINONE] FLAVOPROTEIN SUBUNIT, MITOCHONDRIAL"/>
    <property type="match status" value="1"/>
</dbReference>
<dbReference type="Pfam" id="PF00890">
    <property type="entry name" value="FAD_binding_2"/>
    <property type="match status" value="1"/>
</dbReference>
<dbReference type="PIRSF" id="PIRSF000171">
    <property type="entry name" value="SDHA_APRA_LASPO"/>
    <property type="match status" value="1"/>
</dbReference>
<dbReference type="SUPFAM" id="SSF51905">
    <property type="entry name" value="FAD/NAD(P)-binding domain"/>
    <property type="match status" value="1"/>
</dbReference>
<dbReference type="SUPFAM" id="SSF46977">
    <property type="entry name" value="Succinate dehydrogenase/fumarate reductase flavoprotein C-terminal domain"/>
    <property type="match status" value="1"/>
</dbReference>
<dbReference type="SUPFAM" id="SSF56425">
    <property type="entry name" value="Succinate dehydrogenase/fumarate reductase flavoprotein, catalytic domain"/>
    <property type="match status" value="1"/>
</dbReference>
<name>APRA_MEGG1</name>
<protein>
    <recommendedName>
        <fullName evidence="4 5 7 8 9">Adenylylsulfate reductase subunit alpha</fullName>
        <shortName evidence="5">AdoPSO(4) reductase subunit A</shortName>
        <ecNumber evidence="1 2 3">1.8.99.2</ecNumber>
    </recommendedName>
    <alternativeName>
        <fullName evidence="4">Adenosine 5'-phosphosulfate reductase subunit alpha</fullName>
        <shortName evidence="4">APSR subunit A</shortName>
    </alternativeName>
</protein>
<feature type="chain" id="PRO_0000434041" description="Adenylylsulfate reductase subunit alpha">
    <location>
        <begin position="1"/>
        <end position="666"/>
    </location>
</feature>
<feature type="binding site" evidence="1">
    <location>
        <begin position="32"/>
        <end position="35"/>
    </location>
    <ligand>
        <name>FAD</name>
        <dbReference type="ChEBI" id="CHEBI:57692"/>
    </ligand>
</feature>
<feature type="binding site" evidence="1 10">
    <location>
        <begin position="60"/>
        <end position="61"/>
    </location>
    <ligand>
        <name>FAD</name>
        <dbReference type="ChEBI" id="CHEBI:57692"/>
    </ligand>
</feature>
<feature type="binding site" evidence="1">
    <location>
        <begin position="67"/>
        <end position="69"/>
    </location>
    <ligand>
        <name>FAD</name>
        <dbReference type="ChEBI" id="CHEBI:57692"/>
    </ligand>
</feature>
<feature type="binding site" evidence="1">
    <location>
        <position position="78"/>
    </location>
    <ligand>
        <name>FAD</name>
        <dbReference type="ChEBI" id="CHEBI:57692"/>
    </ligand>
</feature>
<feature type="binding site" evidence="1">
    <location>
        <position position="193"/>
    </location>
    <ligand>
        <name>FAD</name>
        <dbReference type="ChEBI" id="CHEBI:57692"/>
    </ligand>
</feature>
<feature type="binding site" evidence="1 10">
    <location>
        <position position="259"/>
    </location>
    <ligand>
        <name>FAD</name>
        <dbReference type="ChEBI" id="CHEBI:57692"/>
    </ligand>
</feature>
<feature type="binding site" evidence="1 10">
    <location>
        <position position="417"/>
    </location>
    <ligand>
        <name>FAD</name>
        <dbReference type="ChEBI" id="CHEBI:57692"/>
    </ligand>
</feature>
<feature type="binding site" evidence="1 10">
    <location>
        <begin position="461"/>
        <end position="462"/>
    </location>
    <ligand>
        <name>FAD</name>
        <dbReference type="ChEBI" id="CHEBI:57692"/>
    </ligand>
</feature>
<feature type="binding site" evidence="1 10">
    <location>
        <position position="472"/>
    </location>
    <ligand>
        <name>FAD</name>
        <dbReference type="ChEBI" id="CHEBI:57692"/>
    </ligand>
</feature>
<feature type="site" description="Important for interaction with AprB and for the recognition of substrate at the substrate channel entrance" evidence="1">
    <location>
        <position position="160"/>
    </location>
</feature>
<feature type="site" description="Important for interaction with AprB and for the binding of substrate at the substrate channel entrance" evidence="1">
    <location>
        <position position="282"/>
    </location>
</feature>
<feature type="site" description="Important for interaction with AprB and for the binding of substrate at the substrate channel entrance" evidence="1">
    <location>
        <position position="300"/>
    </location>
</feature>
<feature type="sequence conflict" description="In Ref. 3; no nucleotide entry." evidence="6" ref="3">
    <original>T</original>
    <variation>D</variation>
    <location>
        <position position="664"/>
    </location>
</feature>
<feature type="helix" evidence="11">
    <location>
        <begin position="5"/>
        <end position="7"/>
    </location>
</feature>
<feature type="strand" evidence="11">
    <location>
        <begin position="21"/>
        <end position="24"/>
    </location>
</feature>
<feature type="strand" evidence="11">
    <location>
        <begin position="26"/>
        <end position="30"/>
    </location>
</feature>
<feature type="helix" evidence="11">
    <location>
        <begin position="34"/>
        <end position="50"/>
    </location>
</feature>
<feature type="strand" evidence="11">
    <location>
        <begin position="56"/>
        <end position="59"/>
    </location>
</feature>
<feature type="turn" evidence="11">
    <location>
        <begin position="64"/>
        <end position="66"/>
    </location>
</feature>
<feature type="turn" evidence="11">
    <location>
        <begin position="69"/>
        <end position="72"/>
    </location>
</feature>
<feature type="strand" evidence="11">
    <location>
        <begin position="74"/>
        <end position="77"/>
    </location>
</feature>
<feature type="helix" evidence="11">
    <location>
        <begin position="86"/>
        <end position="96"/>
    </location>
</feature>
<feature type="turn" evidence="11">
    <location>
        <begin position="97"/>
        <end position="99"/>
    </location>
</feature>
<feature type="helix" evidence="11">
    <location>
        <begin position="103"/>
        <end position="123"/>
    </location>
</feature>
<feature type="strand" evidence="11">
    <location>
        <begin position="132"/>
        <end position="134"/>
    </location>
</feature>
<feature type="helix" evidence="11">
    <location>
        <begin position="139"/>
        <end position="145"/>
    </location>
</feature>
<feature type="turn" evidence="11">
    <location>
        <begin position="149"/>
        <end position="152"/>
    </location>
</feature>
<feature type="strand" evidence="11">
    <location>
        <begin position="163"/>
        <end position="169"/>
    </location>
</feature>
<feature type="helix" evidence="11">
    <location>
        <begin position="170"/>
        <end position="182"/>
    </location>
</feature>
<feature type="strand" evidence="11">
    <location>
        <begin position="186"/>
        <end position="188"/>
    </location>
</feature>
<feature type="strand" evidence="11">
    <location>
        <begin position="190"/>
        <end position="193"/>
    </location>
</feature>
<feature type="strand" evidence="11">
    <location>
        <begin position="200"/>
        <end position="202"/>
    </location>
</feature>
<feature type="strand" evidence="11">
    <location>
        <begin position="205"/>
        <end position="217"/>
    </location>
</feature>
<feature type="strand" evidence="11">
    <location>
        <begin position="219"/>
        <end position="223"/>
    </location>
</feature>
<feature type="strand" evidence="11">
    <location>
        <begin position="225"/>
        <end position="229"/>
    </location>
</feature>
<feature type="strand" evidence="11">
    <location>
        <begin position="236"/>
        <end position="238"/>
    </location>
</feature>
<feature type="helix" evidence="11">
    <location>
        <begin position="245"/>
        <end position="248"/>
    </location>
</feature>
<feature type="helix" evidence="11">
    <location>
        <begin position="259"/>
        <end position="265"/>
    </location>
</feature>
<feature type="turn" evidence="11">
    <location>
        <begin position="266"/>
        <end position="268"/>
    </location>
</feature>
<feature type="strand" evidence="11">
    <location>
        <begin position="270"/>
        <end position="272"/>
    </location>
</feature>
<feature type="strand" evidence="11">
    <location>
        <begin position="281"/>
        <end position="283"/>
    </location>
</feature>
<feature type="turn" evidence="11">
    <location>
        <begin position="284"/>
        <end position="286"/>
    </location>
</feature>
<feature type="helix" evidence="11">
    <location>
        <begin position="291"/>
        <end position="297"/>
    </location>
</feature>
<feature type="helix" evidence="11">
    <location>
        <begin position="309"/>
        <end position="312"/>
    </location>
</feature>
<feature type="helix" evidence="11">
    <location>
        <begin position="314"/>
        <end position="317"/>
    </location>
</feature>
<feature type="helix" evidence="11">
    <location>
        <begin position="318"/>
        <end position="321"/>
    </location>
</feature>
<feature type="turn" evidence="11">
    <location>
        <begin position="322"/>
        <end position="324"/>
    </location>
</feature>
<feature type="turn" evidence="11">
    <location>
        <begin position="327"/>
        <end position="329"/>
    </location>
</feature>
<feature type="helix" evidence="11">
    <location>
        <begin position="333"/>
        <end position="336"/>
    </location>
</feature>
<feature type="helix" evidence="11">
    <location>
        <begin position="338"/>
        <end position="345"/>
    </location>
</feature>
<feature type="helix" evidence="11">
    <location>
        <begin position="355"/>
        <end position="362"/>
    </location>
</feature>
<feature type="turn" evidence="11">
    <location>
        <begin position="363"/>
        <end position="365"/>
    </location>
</feature>
<feature type="helix" evidence="11">
    <location>
        <begin position="368"/>
        <end position="383"/>
    </location>
</feature>
<feature type="helix" evidence="11">
    <location>
        <begin position="387"/>
        <end position="395"/>
    </location>
</feature>
<feature type="turn" evidence="11">
    <location>
        <begin position="400"/>
        <end position="402"/>
    </location>
</feature>
<feature type="strand" evidence="11">
    <location>
        <begin position="405"/>
        <end position="409"/>
    </location>
</feature>
<feature type="strand" evidence="11">
    <location>
        <begin position="416"/>
        <end position="419"/>
    </location>
</feature>
<feature type="helix" evidence="11">
    <location>
        <begin position="436"/>
        <end position="438"/>
    </location>
</feature>
<feature type="strand" evidence="11">
    <location>
        <begin position="453"/>
        <end position="455"/>
    </location>
</feature>
<feature type="strand" evidence="11">
    <location>
        <begin position="461"/>
        <end position="464"/>
    </location>
</feature>
<feature type="helix" evidence="11">
    <location>
        <begin position="471"/>
        <end position="492"/>
    </location>
</feature>
<feature type="helix" evidence="11">
    <location>
        <begin position="504"/>
        <end position="511"/>
    </location>
</feature>
<feature type="helix" evidence="11">
    <location>
        <begin position="513"/>
        <end position="521"/>
    </location>
</feature>
<feature type="helix" evidence="11">
    <location>
        <begin position="522"/>
        <end position="524"/>
    </location>
</feature>
<feature type="strand" evidence="11">
    <location>
        <begin position="526"/>
        <end position="530"/>
    </location>
</feature>
<feature type="strand" evidence="11">
    <location>
        <begin position="532"/>
        <end position="535"/>
    </location>
</feature>
<feature type="helix" evidence="11">
    <location>
        <begin position="537"/>
        <end position="551"/>
    </location>
</feature>
<feature type="turn" evidence="11">
    <location>
        <begin position="555"/>
        <end position="559"/>
    </location>
</feature>
<feature type="helix" evidence="11">
    <location>
        <begin position="563"/>
        <end position="579"/>
    </location>
</feature>
<feature type="helix" evidence="11">
    <location>
        <begin position="580"/>
        <end position="582"/>
    </location>
</feature>
<feature type="helix" evidence="11">
    <location>
        <begin position="588"/>
        <end position="613"/>
    </location>
</feature>
<feature type="turn" evidence="11">
    <location>
        <begin position="620"/>
        <end position="622"/>
    </location>
</feature>
<feature type="turn" evidence="11">
    <location>
        <begin position="633"/>
        <end position="635"/>
    </location>
</feature>
<feature type="strand" evidence="11">
    <location>
        <begin position="638"/>
        <end position="645"/>
    </location>
</feature>
<feature type="turn" evidence="11">
    <location>
        <begin position="646"/>
        <end position="649"/>
    </location>
</feature>
<feature type="strand" evidence="11">
    <location>
        <begin position="650"/>
        <end position="656"/>
    </location>
</feature>
<gene>
    <name evidence="4 7 8" type="primary">aprA</name>
    <name evidence="8" type="ORF">DGI_0457</name>
</gene>
<reference evidence="7" key="1">
    <citation type="journal article" date="2013" name="J. Bacteriol.">
        <title>Roles of HynAB and Ech, the only two hydrogenases found in the model sulfate reducer Desulfovibrio gigas.</title>
        <authorList>
            <person name="Morais-Silva F.O."/>
            <person name="Santos C.I."/>
            <person name="Rodrigues R."/>
            <person name="Pereira I.A."/>
            <person name="Rodrigues-Pousada C."/>
        </authorList>
    </citation>
    <scope>NUCLEOTIDE SEQUENCE [LARGE SCALE GENOMIC DNA]</scope>
    <source>
        <strain evidence="7">ATCC 19364 / DSM 1382 / NCIMB 9332 / VKM B-1759</strain>
    </source>
</reference>
<reference evidence="8" key="2">
    <citation type="submission" date="2013-07" db="EMBL/GenBank/DDBJ databases">
        <authorList>
            <person name="Morais-Silva F.O."/>
            <person name="Rezende A.M."/>
            <person name="Pimentel C."/>
            <person name="Resende D.M."/>
            <person name="Santos C.I."/>
            <person name="Clemente C."/>
            <person name="de Oliveira L.M."/>
            <person name="da Silva S.M."/>
            <person name="Costa D.A."/>
            <person name="Varela-Raposo A."/>
            <person name="Horacio E.C.A."/>
            <person name="Matos M."/>
            <person name="Flores O."/>
            <person name="Ruiz J.C."/>
            <person name="Rodrigues-Pousada C."/>
        </authorList>
    </citation>
    <scope>NUCLEOTIDE SEQUENCE [LARGE SCALE GENOMIC DNA]</scope>
    <source>
        <strain evidence="8">ATCC 19364 / DSM 1382 / NCIMB 9332 / VKM B-1759</strain>
    </source>
</reference>
<reference evidence="9 10" key="3">
    <citation type="journal article" date="2009" name="J. Bacteriol.">
        <title>Crystal structure of Adenylylsulfate reductase from Desulfovibrio gigas suggests a potential self-regulation mechanism involving the C terminus of the beta-subunit.</title>
        <authorList>
            <person name="Chiang Y.L."/>
            <person name="Hsieh Y.C."/>
            <person name="Fang J.Y."/>
            <person name="Liu E.H."/>
            <person name="Huang Y.C."/>
            <person name="Chuankhayan P."/>
            <person name="Jeyakanthan J."/>
            <person name="Liu M.Y."/>
            <person name="Chan S.I."/>
            <person name="Chen C.J."/>
        </authorList>
    </citation>
    <scope>NUCLEOTIDE SEQUENCE [GENOMIC DNA] OF 3-664</scope>
    <scope>X-RAY CRYSTALLOGRAPHY (3.20 ANGSTROMS) IN COMPLEX WITH FAD AND APRB</scope>
    <scope>FUNCTION</scope>
    <scope>CATALYTIC ACTIVITY OF THE ADENYLYLSULFATE REDUCTASE</scope>
    <scope>COFACTOR</scope>
    <scope>SUBUNIT</scope>
    <scope>DOMAINS</scope>
    <scope>SITES</scope>
    <source>
        <strain evidence="4">ATCC 19364 / DSM 1382 / NCIMB 9332 / VKM B-1759</strain>
    </source>
</reference>
<reference key="4">
    <citation type="journal article" date="1981" name="J. Bacteriol.">
        <title>Localization of dehydrogenases, reductases, and electron transfer components in the sulfate-reducing bacterium Desulfovibrio gigas.</title>
        <authorList>
            <person name="Odom J.M."/>
            <person name="Peck H.D. Jr."/>
        </authorList>
    </citation>
    <scope>CATALYTIC ACTIVITY OF THE ADENYLYLSULFATE REDUCTASE</scope>
    <scope>SUBCELLULAR LOCATION</scope>
</reference>
<reference key="5">
    <citation type="journal article" date="1990" name="Eur. J. Biochem.">
        <title>The active centers of adenylylsulfate reductase from Desulfovibrio gigas. Characterization and spectroscopic studies.</title>
        <authorList>
            <person name="Lampreia J."/>
            <person name="Moura I."/>
            <person name="Teixeira M."/>
            <person name="Peck H.D. Jr."/>
            <person name="Legall J."/>
            <person name="Huynh B.H."/>
            <person name="Moura J.J."/>
        </authorList>
    </citation>
    <scope>FUNCTION</scope>
    <scope>CATALYTIC ACTIVITY OF THE ADENYLYLSULFATE REDUCTASE</scope>
    <scope>COFACTOR</scope>
    <scope>BIOPHYSICOCHEMICAL PROPERTIES</scope>
    <scope>SUBUNIT</scope>
    <scope>EPR AND MOESSBAUER SPECTROSCOPY OF THE ADENYLYLSULFATE REDUCTASE</scope>
    <source>
        <strain evidence="5">ATCC 19364 / DSM 1382 / NCIMB 9332 / VKM B-1759</strain>
    </source>
</reference>
<keyword id="KW-0002">3D-structure</keyword>
<keyword id="KW-0963">Cytoplasm</keyword>
<keyword id="KW-0274">FAD</keyword>
<keyword id="KW-0285">Flavoprotein</keyword>
<keyword id="KW-0547">Nucleotide-binding</keyword>
<keyword id="KW-0560">Oxidoreductase</keyword>
<keyword id="KW-1185">Reference proteome</keyword>
<comment type="function">
    <text evidence="1 2">Catalytic subunit of the adenylylsulfate reductase which catalyzes reversibly the reduction of adenosine 5'-phosphosulfate (APS) to sulfite and AMP during dissimilatory sulfate reduction.</text>
</comment>
<comment type="catalytic activity">
    <reaction evidence="1 2 3">
        <text>sulfite + A + AMP + 2 H(+) = adenosine 5'-phosphosulfate + AH2</text>
        <dbReference type="Rhea" id="RHEA:24240"/>
        <dbReference type="ChEBI" id="CHEBI:13193"/>
        <dbReference type="ChEBI" id="CHEBI:15378"/>
        <dbReference type="ChEBI" id="CHEBI:17359"/>
        <dbReference type="ChEBI" id="CHEBI:17499"/>
        <dbReference type="ChEBI" id="CHEBI:58243"/>
        <dbReference type="ChEBI" id="CHEBI:456215"/>
        <dbReference type="EC" id="1.8.99.2"/>
    </reaction>
</comment>
<comment type="cofactor">
    <cofactor evidence="1 2">
        <name>FAD</name>
        <dbReference type="ChEBI" id="CHEBI:57692"/>
    </cofactor>
</comment>
<comment type="biophysicochemical properties">
    <kinetics>
        <KM evidence="2">0.34 mM for sulfite</KM>
        <KM evidence="2">0.16 mM for AMP</KM>
    </kinetics>
    <phDependence>
        <text evidence="2">Optimum pH is 7.4 for the adenylylsulfate reductase.</text>
    </phDependence>
</comment>
<comment type="subunit">
    <text evidence="1 2">Heterodimer composed of AprA and AprB (PubMed:19820092, PubMed:2158885). The heterodimers can dimerize to form heterotetramers (PubMed:2158885).</text>
</comment>
<comment type="interaction">
    <interactant intactId="EBI-6409227">
        <id>T2G6Z9</id>
    </interactant>
    <interactant intactId="EBI-6409220">
        <id>T2G899</id>
        <label>aprB</label>
    </interactant>
    <organismsDiffer>false</organismsDiffer>
    <experiments>3</experiments>
</comment>
<comment type="subcellular location">
    <subcellularLocation>
        <location evidence="3">Cytoplasm</location>
    </subcellularLocation>
</comment>
<comment type="domain">
    <text evidence="1">Consists of three sections from the N- to the C-terminus: FAD-binding domain, capping domain and helical domain. The FAD-binding domain and the capping domain slightly overlap and form a channel that may transport the substrate.</text>
</comment>
<comment type="similarity">
    <text evidence="6">Belongs to the FAD-dependent oxidoreductase 2 family.</text>
</comment>
<organism>
    <name type="scientific">Megalodesulfovibrio gigas (strain ATCC 19364 / DSM 1382 / NCIMB 9332 / VKM B-1759)</name>
    <name type="common">Desulfovibrio gigas</name>
    <dbReference type="NCBI Taxonomy" id="1121448"/>
    <lineage>
        <taxon>Bacteria</taxon>
        <taxon>Pseudomonadati</taxon>
        <taxon>Thermodesulfobacteriota</taxon>
        <taxon>Desulfovibrionia</taxon>
        <taxon>Desulfovibrionales</taxon>
        <taxon>Desulfovibrionaceae</taxon>
        <taxon>Megalodesulfovibrio</taxon>
    </lineage>
</organism>
<evidence type="ECO:0000269" key="1">
    <source>
    </source>
</evidence>
<evidence type="ECO:0000269" key="2">
    <source>
    </source>
</evidence>
<evidence type="ECO:0000269" key="3">
    <source>
    </source>
</evidence>
<evidence type="ECO:0000303" key="4">
    <source>
    </source>
</evidence>
<evidence type="ECO:0000303" key="5">
    <source>
    </source>
</evidence>
<evidence type="ECO:0000305" key="6"/>
<evidence type="ECO:0000312" key="7">
    <source>
        <dbReference type="EMBL" id="AGS82785.1"/>
    </source>
</evidence>
<evidence type="ECO:0000312" key="8">
    <source>
        <dbReference type="EMBL" id="AGW12370.1"/>
    </source>
</evidence>
<evidence type="ECO:0000312" key="9">
    <source>
        <dbReference type="PDB" id="3GYX"/>
    </source>
</evidence>
<evidence type="ECO:0007744" key="10">
    <source>
        <dbReference type="PDB" id="3GYX"/>
    </source>
</evidence>
<evidence type="ECO:0007829" key="11">
    <source>
        <dbReference type="PDB" id="3GYX"/>
    </source>
</evidence>